<accession>Q1WRG9</accession>
<keyword id="KW-1185">Reference proteome</keyword>
<keyword id="KW-0687">Ribonucleoprotein</keyword>
<keyword id="KW-0689">Ribosomal protein</keyword>
<keyword id="KW-0694">RNA-binding</keyword>
<keyword id="KW-0699">rRNA-binding</keyword>
<name>RL9_LIGS1</name>
<feature type="chain" id="PRO_0000258463" description="Large ribosomal subunit protein bL9">
    <location>
        <begin position="1"/>
        <end position="149"/>
    </location>
</feature>
<protein>
    <recommendedName>
        <fullName evidence="1">Large ribosomal subunit protein bL9</fullName>
    </recommendedName>
    <alternativeName>
        <fullName evidence="2">50S ribosomal protein L9</fullName>
    </alternativeName>
</protein>
<reference key="1">
    <citation type="journal article" date="2006" name="Proc. Natl. Acad. Sci. U.S.A.">
        <title>Multireplicon genome architecture of Lactobacillus salivarius.</title>
        <authorList>
            <person name="Claesson M.J."/>
            <person name="Li Y."/>
            <person name="Leahy S."/>
            <person name="Canchaya C."/>
            <person name="van Pijkeren J.P."/>
            <person name="Cerdeno-Tarraga A.M."/>
            <person name="Parkhill J."/>
            <person name="Flynn S."/>
            <person name="O'Sullivan G.C."/>
            <person name="Collins J.K."/>
            <person name="Higgins D."/>
            <person name="Shanahan F."/>
            <person name="Fitzgerald G.F."/>
            <person name="van Sinderen D."/>
            <person name="O'Toole P.W."/>
        </authorList>
    </citation>
    <scope>NUCLEOTIDE SEQUENCE [LARGE SCALE GENOMIC DNA]</scope>
    <source>
        <strain>UCC118</strain>
    </source>
</reference>
<evidence type="ECO:0000255" key="1">
    <source>
        <dbReference type="HAMAP-Rule" id="MF_00503"/>
    </source>
</evidence>
<evidence type="ECO:0000305" key="2"/>
<proteinExistence type="inferred from homology"/>
<organism>
    <name type="scientific">Ligilactobacillus salivarius (strain UCC118)</name>
    <name type="common">Lactobacillus salivarius</name>
    <dbReference type="NCBI Taxonomy" id="362948"/>
    <lineage>
        <taxon>Bacteria</taxon>
        <taxon>Bacillati</taxon>
        <taxon>Bacillota</taxon>
        <taxon>Bacilli</taxon>
        <taxon>Lactobacillales</taxon>
        <taxon>Lactobacillaceae</taxon>
        <taxon>Ligilactobacillus</taxon>
    </lineage>
</organism>
<sequence>MKIIFTEDVRGKGRRGEIKELPDGYANFLIKQNKAKQANAQAMSQLKGQKRAEARKEAEELEEAKKFKELLESGERVVEMKAKAGTDGRLFGSITSKQISQELEKQYGMKIDKRKMELREPIRTMGYVNVPVKLHNEVTAKIRVHISEK</sequence>
<comment type="function">
    <text evidence="1">Binds to the 23S rRNA.</text>
</comment>
<comment type="similarity">
    <text evidence="1">Belongs to the bacterial ribosomal protein bL9 family.</text>
</comment>
<gene>
    <name evidence="1" type="primary">rplI</name>
    <name type="ordered locus">LSL_1727</name>
</gene>
<dbReference type="EMBL" id="CP000233">
    <property type="protein sequence ID" value="ABE00529.1"/>
    <property type="molecule type" value="Genomic_DNA"/>
</dbReference>
<dbReference type="RefSeq" id="WP_003700898.1">
    <property type="nucleotide sequence ID" value="NC_007929.1"/>
</dbReference>
<dbReference type="RefSeq" id="YP_536612.1">
    <property type="nucleotide sequence ID" value="NC_007929.1"/>
</dbReference>
<dbReference type="SMR" id="Q1WRG9"/>
<dbReference type="STRING" id="362948.LSL_1727"/>
<dbReference type="GeneID" id="89466461"/>
<dbReference type="KEGG" id="lsl:LSL_1727"/>
<dbReference type="PATRIC" id="fig|362948.14.peg.1824"/>
<dbReference type="HOGENOM" id="CLU_078938_3_2_9"/>
<dbReference type="OrthoDB" id="9788336at2"/>
<dbReference type="Proteomes" id="UP000006559">
    <property type="component" value="Chromosome"/>
</dbReference>
<dbReference type="GO" id="GO:1990904">
    <property type="term" value="C:ribonucleoprotein complex"/>
    <property type="evidence" value="ECO:0007669"/>
    <property type="project" value="UniProtKB-KW"/>
</dbReference>
<dbReference type="GO" id="GO:0005840">
    <property type="term" value="C:ribosome"/>
    <property type="evidence" value="ECO:0007669"/>
    <property type="project" value="UniProtKB-KW"/>
</dbReference>
<dbReference type="GO" id="GO:0019843">
    <property type="term" value="F:rRNA binding"/>
    <property type="evidence" value="ECO:0007669"/>
    <property type="project" value="UniProtKB-UniRule"/>
</dbReference>
<dbReference type="GO" id="GO:0003735">
    <property type="term" value="F:structural constituent of ribosome"/>
    <property type="evidence" value="ECO:0007669"/>
    <property type="project" value="InterPro"/>
</dbReference>
<dbReference type="GO" id="GO:0006412">
    <property type="term" value="P:translation"/>
    <property type="evidence" value="ECO:0007669"/>
    <property type="project" value="UniProtKB-UniRule"/>
</dbReference>
<dbReference type="FunFam" id="3.10.430.100:FF:000002">
    <property type="entry name" value="50S ribosomal protein L9"/>
    <property type="match status" value="1"/>
</dbReference>
<dbReference type="Gene3D" id="3.10.430.100">
    <property type="entry name" value="Ribosomal protein L9, C-terminal domain"/>
    <property type="match status" value="1"/>
</dbReference>
<dbReference type="Gene3D" id="3.40.5.10">
    <property type="entry name" value="Ribosomal protein L9, N-terminal domain"/>
    <property type="match status" value="1"/>
</dbReference>
<dbReference type="HAMAP" id="MF_00503">
    <property type="entry name" value="Ribosomal_bL9"/>
    <property type="match status" value="1"/>
</dbReference>
<dbReference type="InterPro" id="IPR000244">
    <property type="entry name" value="Ribosomal_bL9"/>
</dbReference>
<dbReference type="InterPro" id="IPR009027">
    <property type="entry name" value="Ribosomal_bL9/RNase_H1_N"/>
</dbReference>
<dbReference type="InterPro" id="IPR020594">
    <property type="entry name" value="Ribosomal_bL9_bac/chp"/>
</dbReference>
<dbReference type="InterPro" id="IPR020069">
    <property type="entry name" value="Ribosomal_bL9_C"/>
</dbReference>
<dbReference type="InterPro" id="IPR036791">
    <property type="entry name" value="Ribosomal_bL9_C_sf"/>
</dbReference>
<dbReference type="InterPro" id="IPR020070">
    <property type="entry name" value="Ribosomal_bL9_N"/>
</dbReference>
<dbReference type="InterPro" id="IPR036935">
    <property type="entry name" value="Ribosomal_bL9_N_sf"/>
</dbReference>
<dbReference type="NCBIfam" id="TIGR00158">
    <property type="entry name" value="L9"/>
    <property type="match status" value="1"/>
</dbReference>
<dbReference type="PANTHER" id="PTHR21368">
    <property type="entry name" value="50S RIBOSOMAL PROTEIN L9"/>
    <property type="match status" value="1"/>
</dbReference>
<dbReference type="Pfam" id="PF03948">
    <property type="entry name" value="Ribosomal_L9_C"/>
    <property type="match status" value="1"/>
</dbReference>
<dbReference type="Pfam" id="PF01281">
    <property type="entry name" value="Ribosomal_L9_N"/>
    <property type="match status" value="1"/>
</dbReference>
<dbReference type="SUPFAM" id="SSF55658">
    <property type="entry name" value="L9 N-domain-like"/>
    <property type="match status" value="1"/>
</dbReference>
<dbReference type="SUPFAM" id="SSF55653">
    <property type="entry name" value="Ribosomal protein L9 C-domain"/>
    <property type="match status" value="1"/>
</dbReference>